<proteinExistence type="evidence at transcript level"/>
<feature type="chain" id="PRO_0000424789" description="Arpin">
    <location>
        <begin position="1"/>
        <end position="226"/>
    </location>
</feature>
<feature type="region of interest" description="Disordered" evidence="2">
    <location>
        <begin position="197"/>
        <end position="226"/>
    </location>
</feature>
<feature type="compositionally biased region" description="Polar residues" evidence="2">
    <location>
        <begin position="202"/>
        <end position="212"/>
    </location>
</feature>
<feature type="sequence conflict" description="In Ref. 2; AAH93306." evidence="4" ref="2">
    <original>Y</original>
    <variation>F</variation>
    <location>
        <position position="100"/>
    </location>
</feature>
<feature type="sequence conflict" description="In Ref. 2; AAH93306." evidence="4" ref="2">
    <original>F</original>
    <variation>S</variation>
    <location>
        <position position="172"/>
    </location>
</feature>
<gene>
    <name type="primary">arpin</name>
    <name type="ORF">zgc:112432</name>
</gene>
<protein>
    <recommendedName>
        <fullName>Arpin</fullName>
    </recommendedName>
</protein>
<keyword id="KW-0966">Cell projection</keyword>
<keyword id="KW-1185">Reference proteome</keyword>
<reference key="1">
    <citation type="journal article" date="2013" name="Nature">
        <title>The zebrafish reference genome sequence and its relationship to the human genome.</title>
        <authorList>
            <person name="Howe K."/>
            <person name="Clark M.D."/>
            <person name="Torroja C.F."/>
            <person name="Torrance J."/>
            <person name="Berthelot C."/>
            <person name="Muffato M."/>
            <person name="Collins J.E."/>
            <person name="Humphray S."/>
            <person name="McLaren K."/>
            <person name="Matthews L."/>
            <person name="McLaren S."/>
            <person name="Sealy I."/>
            <person name="Caccamo M."/>
            <person name="Churcher C."/>
            <person name="Scott C."/>
            <person name="Barrett J.C."/>
            <person name="Koch R."/>
            <person name="Rauch G.J."/>
            <person name="White S."/>
            <person name="Chow W."/>
            <person name="Kilian B."/>
            <person name="Quintais L.T."/>
            <person name="Guerra-Assuncao J.A."/>
            <person name="Zhou Y."/>
            <person name="Gu Y."/>
            <person name="Yen J."/>
            <person name="Vogel J.H."/>
            <person name="Eyre T."/>
            <person name="Redmond S."/>
            <person name="Banerjee R."/>
            <person name="Chi J."/>
            <person name="Fu B."/>
            <person name="Langley E."/>
            <person name="Maguire S.F."/>
            <person name="Laird G.K."/>
            <person name="Lloyd D."/>
            <person name="Kenyon E."/>
            <person name="Donaldson S."/>
            <person name="Sehra H."/>
            <person name="Almeida-King J."/>
            <person name="Loveland J."/>
            <person name="Trevanion S."/>
            <person name="Jones M."/>
            <person name="Quail M."/>
            <person name="Willey D."/>
            <person name="Hunt A."/>
            <person name="Burton J."/>
            <person name="Sims S."/>
            <person name="McLay K."/>
            <person name="Plumb B."/>
            <person name="Davis J."/>
            <person name="Clee C."/>
            <person name="Oliver K."/>
            <person name="Clark R."/>
            <person name="Riddle C."/>
            <person name="Elliot D."/>
            <person name="Threadgold G."/>
            <person name="Harden G."/>
            <person name="Ware D."/>
            <person name="Begum S."/>
            <person name="Mortimore B."/>
            <person name="Kerry G."/>
            <person name="Heath P."/>
            <person name="Phillimore B."/>
            <person name="Tracey A."/>
            <person name="Corby N."/>
            <person name="Dunn M."/>
            <person name="Johnson C."/>
            <person name="Wood J."/>
            <person name="Clark S."/>
            <person name="Pelan S."/>
            <person name="Griffiths G."/>
            <person name="Smith M."/>
            <person name="Glithero R."/>
            <person name="Howden P."/>
            <person name="Barker N."/>
            <person name="Lloyd C."/>
            <person name="Stevens C."/>
            <person name="Harley J."/>
            <person name="Holt K."/>
            <person name="Panagiotidis G."/>
            <person name="Lovell J."/>
            <person name="Beasley H."/>
            <person name="Henderson C."/>
            <person name="Gordon D."/>
            <person name="Auger K."/>
            <person name="Wright D."/>
            <person name="Collins J."/>
            <person name="Raisen C."/>
            <person name="Dyer L."/>
            <person name="Leung K."/>
            <person name="Robertson L."/>
            <person name="Ambridge K."/>
            <person name="Leongamornlert D."/>
            <person name="McGuire S."/>
            <person name="Gilderthorp R."/>
            <person name="Griffiths C."/>
            <person name="Manthravadi D."/>
            <person name="Nichol S."/>
            <person name="Barker G."/>
            <person name="Whitehead S."/>
            <person name="Kay M."/>
            <person name="Brown J."/>
            <person name="Murnane C."/>
            <person name="Gray E."/>
            <person name="Humphries M."/>
            <person name="Sycamore N."/>
            <person name="Barker D."/>
            <person name="Saunders D."/>
            <person name="Wallis J."/>
            <person name="Babbage A."/>
            <person name="Hammond S."/>
            <person name="Mashreghi-Mohammadi M."/>
            <person name="Barr L."/>
            <person name="Martin S."/>
            <person name="Wray P."/>
            <person name="Ellington A."/>
            <person name="Matthews N."/>
            <person name="Ellwood M."/>
            <person name="Woodmansey R."/>
            <person name="Clark G."/>
            <person name="Cooper J."/>
            <person name="Tromans A."/>
            <person name="Grafham D."/>
            <person name="Skuce C."/>
            <person name="Pandian R."/>
            <person name="Andrews R."/>
            <person name="Harrison E."/>
            <person name="Kimberley A."/>
            <person name="Garnett J."/>
            <person name="Fosker N."/>
            <person name="Hall R."/>
            <person name="Garner P."/>
            <person name="Kelly D."/>
            <person name="Bird C."/>
            <person name="Palmer S."/>
            <person name="Gehring I."/>
            <person name="Berger A."/>
            <person name="Dooley C.M."/>
            <person name="Ersan-Urun Z."/>
            <person name="Eser C."/>
            <person name="Geiger H."/>
            <person name="Geisler M."/>
            <person name="Karotki L."/>
            <person name="Kirn A."/>
            <person name="Konantz J."/>
            <person name="Konantz M."/>
            <person name="Oberlander M."/>
            <person name="Rudolph-Geiger S."/>
            <person name="Teucke M."/>
            <person name="Lanz C."/>
            <person name="Raddatz G."/>
            <person name="Osoegawa K."/>
            <person name="Zhu B."/>
            <person name="Rapp A."/>
            <person name="Widaa S."/>
            <person name="Langford C."/>
            <person name="Yang F."/>
            <person name="Schuster S.C."/>
            <person name="Carter N.P."/>
            <person name="Harrow J."/>
            <person name="Ning Z."/>
            <person name="Herrero J."/>
            <person name="Searle S.M."/>
            <person name="Enright A."/>
            <person name="Geisler R."/>
            <person name="Plasterk R.H."/>
            <person name="Lee C."/>
            <person name="Westerfield M."/>
            <person name="de Jong P.J."/>
            <person name="Zon L.I."/>
            <person name="Postlethwait J.H."/>
            <person name="Nusslein-Volhard C."/>
            <person name="Hubbard T.J."/>
            <person name="Roest Crollius H."/>
            <person name="Rogers J."/>
            <person name="Stemple D.L."/>
        </authorList>
    </citation>
    <scope>NUCLEOTIDE SEQUENCE [LARGE SCALE GENOMIC DNA]</scope>
    <source>
        <strain>Tuebingen</strain>
    </source>
</reference>
<reference key="2">
    <citation type="submission" date="2005-04" db="EMBL/GenBank/DDBJ databases">
        <authorList>
            <consortium name="NIH - Zebrafish Gene Collection (ZGC) project"/>
        </authorList>
    </citation>
    <scope>NUCLEOTIDE SEQUENCE [LARGE SCALE MRNA]</scope>
    <source>
        <tissue>Olfactory epithelium</tissue>
    </source>
</reference>
<reference key="3">
    <citation type="journal article" date="2013" name="Nature">
        <title>Inhibitory signalling to the Arp2/3 complex steers cell migration.</title>
        <authorList>
            <person name="Dang I."/>
            <person name="Gorelik R."/>
            <person name="Sousa-Blin C."/>
            <person name="Derivery E."/>
            <person name="Guerin C."/>
            <person name="Linkner J."/>
            <person name="Nemethova M."/>
            <person name="Dumortier J.G."/>
            <person name="Giger F.A."/>
            <person name="Chipysheva T.A."/>
            <person name="Ermilova V.D."/>
            <person name="Vacher S."/>
            <person name="Campanacci V."/>
            <person name="Herrada I."/>
            <person name="Planson A.G."/>
            <person name="Fetics S."/>
            <person name="Henriot V."/>
            <person name="David V."/>
            <person name="Oguievetskaia K."/>
            <person name="Lakisic G."/>
            <person name="Pierre F."/>
            <person name="Steffen A."/>
            <person name="Boyreau A."/>
            <person name="Peyrieras N."/>
            <person name="Rottner K."/>
            <person name="Zinn-Justin S."/>
            <person name="Cherfils J."/>
            <person name="Bieche I."/>
            <person name="Alexandrova A.Y."/>
            <person name="David N.B."/>
            <person name="Small J.V."/>
            <person name="Faix J."/>
            <person name="Blanchoin L."/>
            <person name="Gautreau A."/>
        </authorList>
    </citation>
    <scope>FUNCTION</scope>
</reference>
<name>ARPIN_DANRE</name>
<sequence length="226" mass="25622">MSRIYDNTALLNKPVHNEKLSFTWDPIVHQSGHGVILEGTVVDFSRHAITDVKNRKERYNVLYIKPSRVHRRKYDSKGNEIEPNFSDTKKVNTGFLMSSYKVEAKGETDCLDERQLREIVNKEQLVKVTIKHCPREAFAFWISEAEMDKTELEPGQEVRLKTKGDGPFIFSFAKLDSGTVTKCNFAGDENAGASWTEKIMANKSNQENTGKSAAQGEGADDDEWDD</sequence>
<organism>
    <name type="scientific">Danio rerio</name>
    <name type="common">Zebrafish</name>
    <name type="synonym">Brachydanio rerio</name>
    <dbReference type="NCBI Taxonomy" id="7955"/>
    <lineage>
        <taxon>Eukaryota</taxon>
        <taxon>Metazoa</taxon>
        <taxon>Chordata</taxon>
        <taxon>Craniata</taxon>
        <taxon>Vertebrata</taxon>
        <taxon>Euteleostomi</taxon>
        <taxon>Actinopterygii</taxon>
        <taxon>Neopterygii</taxon>
        <taxon>Teleostei</taxon>
        <taxon>Ostariophysi</taxon>
        <taxon>Cypriniformes</taxon>
        <taxon>Danionidae</taxon>
        <taxon>Danioninae</taxon>
        <taxon>Danio</taxon>
    </lineage>
</organism>
<accession>Q1LWJ6</accession>
<accession>Q561T7</accession>
<dbReference type="EMBL" id="BX548061">
    <property type="status" value="NOT_ANNOTATED_CDS"/>
    <property type="molecule type" value="Genomic_DNA"/>
</dbReference>
<dbReference type="EMBL" id="BC093306">
    <property type="protein sequence ID" value="AAH93306.1"/>
    <property type="molecule type" value="mRNA"/>
</dbReference>
<dbReference type="RefSeq" id="NP_001017780.1">
    <property type="nucleotide sequence ID" value="NM_001017780.1"/>
</dbReference>
<dbReference type="SASBDB" id="Q1LWJ6"/>
<dbReference type="FunCoup" id="Q1LWJ6">
    <property type="interactions" value="819"/>
</dbReference>
<dbReference type="STRING" id="7955.ENSDARP00000091551"/>
<dbReference type="PaxDb" id="7955-ENSDARP00000091551"/>
<dbReference type="DNASU" id="550477"/>
<dbReference type="Ensembl" id="ENSDART00000100778">
    <property type="protein sequence ID" value="ENSDARP00000091551"/>
    <property type="gene ID" value="ENSDARG00000041085"/>
</dbReference>
<dbReference type="GeneID" id="550477"/>
<dbReference type="KEGG" id="dre:550477"/>
<dbReference type="AGR" id="ZFIN:ZDB-GENE-050417-304"/>
<dbReference type="CTD" id="348110"/>
<dbReference type="ZFIN" id="ZDB-GENE-050417-304">
    <property type="gene designation" value="arpin"/>
</dbReference>
<dbReference type="eggNOG" id="ENOG502R4IG">
    <property type="taxonomic scope" value="Eukaryota"/>
</dbReference>
<dbReference type="HOGENOM" id="CLU_106544_0_0_1"/>
<dbReference type="InParanoid" id="Q1LWJ6"/>
<dbReference type="OMA" id="QTVAFWI"/>
<dbReference type="OrthoDB" id="5953051at2759"/>
<dbReference type="PhylomeDB" id="Q1LWJ6"/>
<dbReference type="PRO" id="PR:Q1LWJ6"/>
<dbReference type="Proteomes" id="UP000000437">
    <property type="component" value="Alternate scaffold 18"/>
</dbReference>
<dbReference type="Proteomes" id="UP000000437">
    <property type="component" value="Chromosome 18"/>
</dbReference>
<dbReference type="Bgee" id="ENSDARG00000041085">
    <property type="expression patterns" value="Expressed in swim bladder and 23 other cell types or tissues"/>
</dbReference>
<dbReference type="GO" id="GO:0030027">
    <property type="term" value="C:lamellipodium"/>
    <property type="evidence" value="ECO:0007669"/>
    <property type="project" value="UniProtKB-SubCell"/>
</dbReference>
<dbReference type="GO" id="GO:0033058">
    <property type="term" value="P:directional locomotion"/>
    <property type="evidence" value="ECO:0000314"/>
    <property type="project" value="UniProtKB"/>
</dbReference>
<dbReference type="GO" id="GO:0051126">
    <property type="term" value="P:negative regulation of actin nucleation"/>
    <property type="evidence" value="ECO:0000318"/>
    <property type="project" value="GO_Central"/>
</dbReference>
<dbReference type="GO" id="GO:0030336">
    <property type="term" value="P:negative regulation of cell migration"/>
    <property type="evidence" value="ECO:0000315"/>
    <property type="project" value="UniProtKB"/>
</dbReference>
<dbReference type="InterPro" id="IPR018889">
    <property type="entry name" value="Arpin"/>
</dbReference>
<dbReference type="PANTHER" id="PTHR31199">
    <property type="entry name" value="ARPIN"/>
    <property type="match status" value="1"/>
</dbReference>
<dbReference type="PANTHER" id="PTHR31199:SF1">
    <property type="entry name" value="ARPIN"/>
    <property type="match status" value="1"/>
</dbReference>
<dbReference type="Pfam" id="PF10574">
    <property type="entry name" value="UPF0552"/>
    <property type="match status" value="1"/>
</dbReference>
<evidence type="ECO:0000250" key="1"/>
<evidence type="ECO:0000256" key="2">
    <source>
        <dbReference type="SAM" id="MobiDB-lite"/>
    </source>
</evidence>
<evidence type="ECO:0000269" key="3">
    <source>
    </source>
</evidence>
<evidence type="ECO:0000305" key="4"/>
<comment type="function">
    <text evidence="1 3">Regulates actin polymerization by inhibiting the actin-nucleating activity of the Arp2/3 complex; the function is competitive with nucleation promoting factors (By similarity). Involved in steering cell migration by controlling its directional persistence.</text>
</comment>
<comment type="subunit">
    <text evidence="1">Associates with the Arp2/3 complex.</text>
</comment>
<comment type="subcellular location">
    <subcellularLocation>
        <location evidence="1">Cell projection</location>
        <location evidence="1">Lamellipodium</location>
    </subcellularLocation>
</comment>
<comment type="domain">
    <text evidence="1">The acidic C-terminus is necessary and sufficient to inhibit ARP2/3 complex activity.</text>
</comment>
<comment type="similarity">
    <text evidence="4">Belongs to the Arpin family.</text>
</comment>